<gene>
    <name type="ordered locus">SE_0317</name>
</gene>
<proteinExistence type="inferred from homology"/>
<name>Y317_STAES</name>
<reference key="1">
    <citation type="journal article" date="2003" name="Mol. Microbiol.">
        <title>Genome-based analysis of virulence genes in a non-biofilm-forming Staphylococcus epidermidis strain (ATCC 12228).</title>
        <authorList>
            <person name="Zhang Y.-Q."/>
            <person name="Ren S.-X."/>
            <person name="Li H.-L."/>
            <person name="Wang Y.-X."/>
            <person name="Fu G."/>
            <person name="Yang J."/>
            <person name="Qin Z.-Q."/>
            <person name="Miao Y.-G."/>
            <person name="Wang W.-Y."/>
            <person name="Chen R.-S."/>
            <person name="Shen Y."/>
            <person name="Chen Z."/>
            <person name="Yuan Z.-H."/>
            <person name="Zhao G.-P."/>
            <person name="Qu D."/>
            <person name="Danchin A."/>
            <person name="Wen Y.-M."/>
        </authorList>
    </citation>
    <scope>NUCLEOTIDE SEQUENCE [LARGE SCALE GENOMIC DNA]</scope>
    <source>
        <strain>ATCC 12228 / FDA PCI 1200</strain>
    </source>
</reference>
<comment type="similarity">
    <text evidence="1">Belongs to the NAD(P)-dependent epimerase/dehydratase family.</text>
</comment>
<organism>
    <name type="scientific">Staphylococcus epidermidis (strain ATCC 12228 / FDA PCI 1200)</name>
    <dbReference type="NCBI Taxonomy" id="176280"/>
    <lineage>
        <taxon>Bacteria</taxon>
        <taxon>Bacillati</taxon>
        <taxon>Bacillota</taxon>
        <taxon>Bacilli</taxon>
        <taxon>Bacillales</taxon>
        <taxon>Staphylococcaceae</taxon>
        <taxon>Staphylococcus</taxon>
    </lineage>
</organism>
<protein>
    <recommendedName>
        <fullName>Uncharacterized epimerase/dehydratase SE_0317</fullName>
    </recommendedName>
</protein>
<sequence length="318" mass="36318">MKKIIITGALGQIGTELVIKCRERYGTENVLATDIRKPEPHSPVKNGPFEILDVTDRNRLFETVRYFNADTLMHMAALLSATAEKKPLVAWDLNMGGLINTLEAARRYQLKYFTPSSIGAFGISTPKVNTPQLTIQQPTTMYGINKVTGELLCQYYYVKFGVDTRSVRFPGLISHVKEPGGGITDYAVDMYFKAVRKGHYTSYINRYTYMDMMYMEDAIDAIIKLMEEDSVKLKTRNGYNLSAMSIEPEMLKQAIQVYYPDFTLDYDIDLERQDIALSWPDSIDTSCAQEEWGFDPKYDLPTMTKVMLEAIEKKQKEC</sequence>
<feature type="chain" id="PRO_0000270852" description="Uncharacterized epimerase/dehydratase SE_0317">
    <location>
        <begin position="1"/>
        <end position="318"/>
    </location>
</feature>
<accession>Q8CQ79</accession>
<evidence type="ECO:0000305" key="1"/>
<dbReference type="EMBL" id="AE015929">
    <property type="protein sequence ID" value="AAO03914.1"/>
    <property type="molecule type" value="Genomic_DNA"/>
</dbReference>
<dbReference type="RefSeq" id="NP_763872.1">
    <property type="nucleotide sequence ID" value="NC_004461.1"/>
</dbReference>
<dbReference type="RefSeq" id="WP_001832307.1">
    <property type="nucleotide sequence ID" value="NZ_WBME01000014.1"/>
</dbReference>
<dbReference type="SMR" id="Q8CQ79"/>
<dbReference type="KEGG" id="sep:SE_0317"/>
<dbReference type="PATRIC" id="fig|176280.10.peg.292"/>
<dbReference type="eggNOG" id="COG0451">
    <property type="taxonomic scope" value="Bacteria"/>
</dbReference>
<dbReference type="HOGENOM" id="CLU_007383_19_1_9"/>
<dbReference type="OrthoDB" id="9779902at2"/>
<dbReference type="Proteomes" id="UP000001411">
    <property type="component" value="Chromosome"/>
</dbReference>
<dbReference type="GO" id="GO:0008743">
    <property type="term" value="F:L-threonine 3-dehydrogenase activity"/>
    <property type="evidence" value="ECO:0007669"/>
    <property type="project" value="TreeGrafter"/>
</dbReference>
<dbReference type="GO" id="GO:0006567">
    <property type="term" value="P:threonine catabolic process"/>
    <property type="evidence" value="ECO:0007669"/>
    <property type="project" value="TreeGrafter"/>
</dbReference>
<dbReference type="FunFam" id="3.40.50.720:FF:000077">
    <property type="entry name" value="L-threonine 3-dehydrogenase, mitochondrial"/>
    <property type="match status" value="1"/>
</dbReference>
<dbReference type="Gene3D" id="3.40.50.720">
    <property type="entry name" value="NAD(P)-binding Rossmann-like Domain"/>
    <property type="match status" value="1"/>
</dbReference>
<dbReference type="InterPro" id="IPR001509">
    <property type="entry name" value="Epimerase_deHydtase"/>
</dbReference>
<dbReference type="InterPro" id="IPR036291">
    <property type="entry name" value="NAD(P)-bd_dom_sf"/>
</dbReference>
<dbReference type="InterPro" id="IPR051225">
    <property type="entry name" value="NAD(P)_epim/dehydratase"/>
</dbReference>
<dbReference type="PANTHER" id="PTHR42687">
    <property type="entry name" value="L-THREONINE 3-DEHYDROGENASE"/>
    <property type="match status" value="1"/>
</dbReference>
<dbReference type="PANTHER" id="PTHR42687:SF1">
    <property type="entry name" value="L-THREONINE 3-DEHYDROGENASE, MITOCHONDRIAL"/>
    <property type="match status" value="1"/>
</dbReference>
<dbReference type="Pfam" id="PF01370">
    <property type="entry name" value="Epimerase"/>
    <property type="match status" value="1"/>
</dbReference>
<dbReference type="SUPFAM" id="SSF51735">
    <property type="entry name" value="NAD(P)-binding Rossmann-fold domains"/>
    <property type="match status" value="1"/>
</dbReference>